<evidence type="ECO:0000255" key="1"/>
<evidence type="ECO:0000269" key="2">
    <source>
    </source>
</evidence>
<evidence type="ECO:0000305" key="3"/>
<comment type="function">
    <text evidence="2">Converts heme B (protoheme IX) to heme O by substitution of the vinyl group on carbon 2 of heme B porphyrin ring with a hydroxyethyl farnesyl side group.</text>
</comment>
<comment type="catalytic activity">
    <reaction>
        <text>heme b + (2E,6E)-farnesyl diphosphate + H2O = Fe(II)-heme o + diphosphate</text>
        <dbReference type="Rhea" id="RHEA:28070"/>
        <dbReference type="ChEBI" id="CHEBI:15377"/>
        <dbReference type="ChEBI" id="CHEBI:33019"/>
        <dbReference type="ChEBI" id="CHEBI:60344"/>
        <dbReference type="ChEBI" id="CHEBI:60530"/>
        <dbReference type="ChEBI" id="CHEBI:175763"/>
        <dbReference type="EC" id="2.5.1.141"/>
    </reaction>
</comment>
<comment type="pathway">
    <text>Porphyrin-containing compound metabolism; heme O biosynthesis; heme O from protoheme: step 1/1.</text>
</comment>
<comment type="subunit">
    <text>Interacts with CtaA.</text>
</comment>
<comment type="interaction">
    <interactant intactId="EBI-2122343">
        <id>O31652</id>
    </interactant>
    <interactant intactId="EBI-2122325">
        <id>P12946</id>
        <label>ctaA</label>
    </interactant>
    <organismsDiffer>false</organismsDiffer>
    <experiments>3</experiments>
</comment>
<comment type="subcellular location">
    <subcellularLocation>
        <location>Cell membrane</location>
        <topology>Multi-pass membrane protein</topology>
    </subcellularLocation>
</comment>
<comment type="miscellaneous">
    <text>Carbon 2 of the heme B porphyrin ring is defined according to the Fischer nomenclature.</text>
</comment>
<comment type="similarity">
    <text evidence="3">Belongs to the UbiA prenyltransferase family. Protoheme IX farnesyltransferase subfamily.</text>
</comment>
<comment type="sequence caution" evidence="3">
    <conflict type="erroneous initiation">
        <sequence resource="EMBL-CDS" id="CAB13065"/>
    </conflict>
</comment>
<accession>O31652</accession>
<keyword id="KW-1003">Cell membrane</keyword>
<keyword id="KW-0350">Heme biosynthesis</keyword>
<keyword id="KW-0472">Membrane</keyword>
<keyword id="KW-1185">Reference proteome</keyword>
<keyword id="KW-0808">Transferase</keyword>
<keyword id="KW-0812">Transmembrane</keyword>
<keyword id="KW-1133">Transmembrane helix</keyword>
<name>COXX1_BACSU</name>
<reference key="1">
    <citation type="journal article" date="1997" name="Nature">
        <title>The complete genome sequence of the Gram-positive bacterium Bacillus subtilis.</title>
        <authorList>
            <person name="Kunst F."/>
            <person name="Ogasawara N."/>
            <person name="Moszer I."/>
            <person name="Albertini A.M."/>
            <person name="Alloni G."/>
            <person name="Azevedo V."/>
            <person name="Bertero M.G."/>
            <person name="Bessieres P."/>
            <person name="Bolotin A."/>
            <person name="Borchert S."/>
            <person name="Borriss R."/>
            <person name="Boursier L."/>
            <person name="Brans A."/>
            <person name="Braun M."/>
            <person name="Brignell S.C."/>
            <person name="Bron S."/>
            <person name="Brouillet S."/>
            <person name="Bruschi C.V."/>
            <person name="Caldwell B."/>
            <person name="Capuano V."/>
            <person name="Carter N.M."/>
            <person name="Choi S.-K."/>
            <person name="Codani J.-J."/>
            <person name="Connerton I.F."/>
            <person name="Cummings N.J."/>
            <person name="Daniel R.A."/>
            <person name="Denizot F."/>
            <person name="Devine K.M."/>
            <person name="Duesterhoeft A."/>
            <person name="Ehrlich S.D."/>
            <person name="Emmerson P.T."/>
            <person name="Entian K.-D."/>
            <person name="Errington J."/>
            <person name="Fabret C."/>
            <person name="Ferrari E."/>
            <person name="Foulger D."/>
            <person name="Fritz C."/>
            <person name="Fujita M."/>
            <person name="Fujita Y."/>
            <person name="Fuma S."/>
            <person name="Galizzi A."/>
            <person name="Galleron N."/>
            <person name="Ghim S.-Y."/>
            <person name="Glaser P."/>
            <person name="Goffeau A."/>
            <person name="Golightly E.J."/>
            <person name="Grandi G."/>
            <person name="Guiseppi G."/>
            <person name="Guy B.J."/>
            <person name="Haga K."/>
            <person name="Haiech J."/>
            <person name="Harwood C.R."/>
            <person name="Henaut A."/>
            <person name="Hilbert H."/>
            <person name="Holsappel S."/>
            <person name="Hosono S."/>
            <person name="Hullo M.-F."/>
            <person name="Itaya M."/>
            <person name="Jones L.-M."/>
            <person name="Joris B."/>
            <person name="Karamata D."/>
            <person name="Kasahara Y."/>
            <person name="Klaerr-Blanchard M."/>
            <person name="Klein C."/>
            <person name="Kobayashi Y."/>
            <person name="Koetter P."/>
            <person name="Koningstein G."/>
            <person name="Krogh S."/>
            <person name="Kumano M."/>
            <person name="Kurita K."/>
            <person name="Lapidus A."/>
            <person name="Lardinois S."/>
            <person name="Lauber J."/>
            <person name="Lazarevic V."/>
            <person name="Lee S.-M."/>
            <person name="Levine A."/>
            <person name="Liu H."/>
            <person name="Masuda S."/>
            <person name="Mauel C."/>
            <person name="Medigue C."/>
            <person name="Medina N."/>
            <person name="Mellado R.P."/>
            <person name="Mizuno M."/>
            <person name="Moestl D."/>
            <person name="Nakai S."/>
            <person name="Noback M."/>
            <person name="Noone D."/>
            <person name="O'Reilly M."/>
            <person name="Ogawa K."/>
            <person name="Ogiwara A."/>
            <person name="Oudega B."/>
            <person name="Park S.-H."/>
            <person name="Parro V."/>
            <person name="Pohl T.M."/>
            <person name="Portetelle D."/>
            <person name="Porwollik S."/>
            <person name="Prescott A.M."/>
            <person name="Presecan E."/>
            <person name="Pujic P."/>
            <person name="Purnelle B."/>
            <person name="Rapoport G."/>
            <person name="Rey M."/>
            <person name="Reynolds S."/>
            <person name="Rieger M."/>
            <person name="Rivolta C."/>
            <person name="Rocha E."/>
            <person name="Roche B."/>
            <person name="Rose M."/>
            <person name="Sadaie Y."/>
            <person name="Sato T."/>
            <person name="Scanlan E."/>
            <person name="Schleich S."/>
            <person name="Schroeter R."/>
            <person name="Scoffone F."/>
            <person name="Sekiguchi J."/>
            <person name="Sekowska A."/>
            <person name="Seror S.J."/>
            <person name="Serror P."/>
            <person name="Shin B.-S."/>
            <person name="Soldo B."/>
            <person name="Sorokin A."/>
            <person name="Tacconi E."/>
            <person name="Takagi T."/>
            <person name="Takahashi H."/>
            <person name="Takemaru K."/>
            <person name="Takeuchi M."/>
            <person name="Tamakoshi A."/>
            <person name="Tanaka T."/>
            <person name="Terpstra P."/>
            <person name="Tognoni A."/>
            <person name="Tosato V."/>
            <person name="Uchiyama S."/>
            <person name="Vandenbol M."/>
            <person name="Vannier F."/>
            <person name="Vassarotti A."/>
            <person name="Viari A."/>
            <person name="Wambutt R."/>
            <person name="Wedler E."/>
            <person name="Wedler H."/>
            <person name="Weitzenegger T."/>
            <person name="Winters P."/>
            <person name="Wipat A."/>
            <person name="Yamamoto H."/>
            <person name="Yamane K."/>
            <person name="Yasumoto K."/>
            <person name="Yata K."/>
            <person name="Yoshida K."/>
            <person name="Yoshikawa H.-F."/>
            <person name="Zumstein E."/>
            <person name="Yoshikawa H."/>
            <person name="Danchin A."/>
        </authorList>
    </citation>
    <scope>NUCLEOTIDE SEQUENCE [LARGE SCALE GENOMIC DNA]</scope>
    <source>
        <strain>168</strain>
    </source>
</reference>
<reference key="2">
    <citation type="journal article" date="2009" name="Microbiology">
        <title>From a consortium sequence to a unified sequence: the Bacillus subtilis 168 reference genome a decade later.</title>
        <authorList>
            <person name="Barbe V."/>
            <person name="Cruveiller S."/>
            <person name="Kunst F."/>
            <person name="Lenoble P."/>
            <person name="Meurice G."/>
            <person name="Sekowska A."/>
            <person name="Vallenet D."/>
            <person name="Wang T."/>
            <person name="Moszer I."/>
            <person name="Medigue C."/>
            <person name="Danchin A."/>
        </authorList>
    </citation>
    <scope>SEQUENCE REVISION TO 43-45</scope>
</reference>
<reference key="3">
    <citation type="journal article" date="2000" name="FEMS Microbiol. Lett.">
        <title>The Bacillus subtilis ctaB paralogue, yjdK, can complement the heme A synthesis deficiency of a CtaB-deficient mutant.</title>
        <authorList>
            <person name="Throne-Holst M."/>
            <person name="Hederstedt L."/>
        </authorList>
    </citation>
    <scope>FUNCTION</scope>
</reference>
<protein>
    <recommendedName>
        <fullName>Protoheme IX farnesyltransferase 1</fullName>
        <ecNumber>2.5.1.141</ecNumber>
    </recommendedName>
    <alternativeName>
        <fullName>Heme B farnesyltransferase 1</fullName>
    </alternativeName>
    <alternativeName>
        <fullName>Heme O synthase 1</fullName>
    </alternativeName>
</protein>
<feature type="chain" id="PRO_0000162912" description="Protoheme IX farnesyltransferase 1">
    <location>
        <begin position="1"/>
        <end position="320"/>
    </location>
</feature>
<feature type="transmembrane region" description="Helical" evidence="1">
    <location>
        <begin position="34"/>
        <end position="54"/>
    </location>
</feature>
<feature type="transmembrane region" description="Helical" evidence="1">
    <location>
        <begin position="58"/>
        <end position="78"/>
    </location>
</feature>
<feature type="transmembrane region" description="Helical" evidence="1">
    <location>
        <begin position="112"/>
        <end position="132"/>
    </location>
</feature>
<feature type="transmembrane region" description="Helical" evidence="1">
    <location>
        <begin position="135"/>
        <end position="155"/>
    </location>
</feature>
<feature type="transmembrane region" description="Helical" evidence="1">
    <location>
        <begin position="160"/>
        <end position="180"/>
    </location>
</feature>
<feature type="transmembrane region" description="Helical" evidence="1">
    <location>
        <begin position="189"/>
        <end position="209"/>
    </location>
</feature>
<feature type="transmembrane region" description="Helical" evidence="1">
    <location>
        <begin position="234"/>
        <end position="254"/>
    </location>
</feature>
<feature type="transmembrane region" description="Helical" evidence="1">
    <location>
        <begin position="255"/>
        <end position="275"/>
    </location>
</feature>
<feature type="transmembrane region" description="Helical" evidence="1">
    <location>
        <begin position="299"/>
        <end position="319"/>
    </location>
</feature>
<dbReference type="EC" id="2.5.1.141"/>
<dbReference type="EMBL" id="AL009126">
    <property type="protein sequence ID" value="CAB13065.2"/>
    <property type="status" value="ALT_INIT"/>
    <property type="molecule type" value="Genomic_DNA"/>
</dbReference>
<dbReference type="PIR" id="F69849">
    <property type="entry name" value="F69849"/>
</dbReference>
<dbReference type="RefSeq" id="NP_389090.2">
    <property type="nucleotide sequence ID" value="NC_000964.3"/>
</dbReference>
<dbReference type="SMR" id="O31652"/>
<dbReference type="FunCoup" id="O31652">
    <property type="interactions" value="768"/>
</dbReference>
<dbReference type="IntAct" id="O31652">
    <property type="interactions" value="1"/>
</dbReference>
<dbReference type="STRING" id="224308.BSU12080"/>
<dbReference type="PaxDb" id="224308-BSU12080"/>
<dbReference type="EnsemblBacteria" id="CAB13065">
    <property type="protein sequence ID" value="CAB13065"/>
    <property type="gene ID" value="BSU_12080"/>
</dbReference>
<dbReference type="GeneID" id="939825"/>
<dbReference type="KEGG" id="bsu:BSU12080"/>
<dbReference type="PATRIC" id="fig|224308.179.peg.1305"/>
<dbReference type="eggNOG" id="COG0109">
    <property type="taxonomic scope" value="Bacteria"/>
</dbReference>
<dbReference type="InParanoid" id="O31652"/>
<dbReference type="OrthoDB" id="9814417at2"/>
<dbReference type="BioCyc" id="BSUB:BSU12080-MONOMER"/>
<dbReference type="BioCyc" id="MetaCyc:BSU12080-MONOMER"/>
<dbReference type="UniPathway" id="UPA00834">
    <property type="reaction ID" value="UER00712"/>
</dbReference>
<dbReference type="Proteomes" id="UP000001570">
    <property type="component" value="Chromosome"/>
</dbReference>
<dbReference type="GO" id="GO:0005886">
    <property type="term" value="C:plasma membrane"/>
    <property type="evidence" value="ECO:0000318"/>
    <property type="project" value="GO_Central"/>
</dbReference>
<dbReference type="GO" id="GO:0008495">
    <property type="term" value="F:protoheme IX farnesyltransferase activity"/>
    <property type="evidence" value="ECO:0000318"/>
    <property type="project" value="GO_Central"/>
</dbReference>
<dbReference type="GO" id="GO:0048034">
    <property type="term" value="P:heme O biosynthetic process"/>
    <property type="evidence" value="ECO:0000318"/>
    <property type="project" value="GO_Central"/>
</dbReference>
<dbReference type="CDD" id="cd13957">
    <property type="entry name" value="PT_UbiA_Cox10"/>
    <property type="match status" value="1"/>
</dbReference>
<dbReference type="Gene3D" id="1.10.357.140">
    <property type="entry name" value="UbiA prenyltransferase"/>
    <property type="match status" value="1"/>
</dbReference>
<dbReference type="HAMAP" id="MF_00154">
    <property type="entry name" value="CyoE_CtaB"/>
    <property type="match status" value="1"/>
</dbReference>
<dbReference type="InterPro" id="IPR006369">
    <property type="entry name" value="Protohaem_IX_farnesylTrfase"/>
</dbReference>
<dbReference type="InterPro" id="IPR000537">
    <property type="entry name" value="UbiA_prenyltransferase"/>
</dbReference>
<dbReference type="InterPro" id="IPR030470">
    <property type="entry name" value="UbiA_prenylTrfase_CS"/>
</dbReference>
<dbReference type="InterPro" id="IPR044878">
    <property type="entry name" value="UbiA_sf"/>
</dbReference>
<dbReference type="NCBIfam" id="TIGR01473">
    <property type="entry name" value="cyoE_ctaB"/>
    <property type="match status" value="1"/>
</dbReference>
<dbReference type="NCBIfam" id="NF003348">
    <property type="entry name" value="PRK04375.1-1"/>
    <property type="match status" value="1"/>
</dbReference>
<dbReference type="PANTHER" id="PTHR43448">
    <property type="entry name" value="PROTOHEME IX FARNESYLTRANSFERASE, MITOCHONDRIAL"/>
    <property type="match status" value="1"/>
</dbReference>
<dbReference type="PANTHER" id="PTHR43448:SF2">
    <property type="entry name" value="PROTOHEME IX FARNESYLTRANSFERASE, MITOCHONDRIAL"/>
    <property type="match status" value="1"/>
</dbReference>
<dbReference type="Pfam" id="PF01040">
    <property type="entry name" value="UbiA"/>
    <property type="match status" value="1"/>
</dbReference>
<dbReference type="PROSITE" id="PS00943">
    <property type="entry name" value="UBIA"/>
    <property type="match status" value="1"/>
</dbReference>
<sequence length="320" mass="35638">MENTRDSAAISETKYIKASNRVTIYDFIKLAKPGIIISNSIAAFGGFWIAFASAEKTLTGLAFLMTMVTAMLGTAFVMASGTVYNNYFDRHMDAKMARTRSRASVTGKMPPAMILTYGSVLGIAGLAMLYSLNPLTAFLGLAAFIFYAIIYTVWVKRTSVWSTFVGSFPGAAPPLMGYCAVTGDFSMTAVLLYTIMFLWQPPHFWAIGIRRKEEYRAAGVPLLPVVKGNHVTKIKMMQYIAVLVPVTLLFPFSLGTGHISPFYFLAALVLGGIWIKKSIKGFKTDDDVKWAKDMFVYSLIYFCLLFFIMMIDSFMMFLIR</sequence>
<organism>
    <name type="scientific">Bacillus subtilis (strain 168)</name>
    <dbReference type="NCBI Taxonomy" id="224308"/>
    <lineage>
        <taxon>Bacteria</taxon>
        <taxon>Bacillati</taxon>
        <taxon>Bacillota</taxon>
        <taxon>Bacilli</taxon>
        <taxon>Bacillales</taxon>
        <taxon>Bacillaceae</taxon>
        <taxon>Bacillus</taxon>
    </lineage>
</organism>
<proteinExistence type="evidence at protein level"/>
<gene>
    <name type="primary">ctaB1</name>
    <name type="synonym">ctaO</name>
    <name type="ordered locus">BSU12080</name>
</gene>